<protein>
    <recommendedName>
        <fullName>Probetacellulin</fullName>
    </recommendedName>
    <component>
        <recommendedName>
            <fullName>Betacellulin</fullName>
            <shortName>BTC</shortName>
        </recommendedName>
    </component>
</protein>
<gene>
    <name type="primary">BTC</name>
</gene>
<evidence type="ECO:0000250" key="1"/>
<evidence type="ECO:0000255" key="2"/>
<evidence type="ECO:0000255" key="3">
    <source>
        <dbReference type="PROSITE-ProRule" id="PRU00076"/>
    </source>
</evidence>
<evidence type="ECO:0000269" key="4">
    <source>
    </source>
</evidence>
<evidence type="ECO:0000269" key="5">
    <source>
    </source>
</evidence>
<evidence type="ECO:0000269" key="6">
    <source>
    </source>
</evidence>
<evidence type="ECO:0000269" key="7">
    <source>
    </source>
</evidence>
<evidence type="ECO:0007829" key="8">
    <source>
        <dbReference type="PDB" id="1IOX"/>
    </source>
</evidence>
<evidence type="ECO:0007829" key="9">
    <source>
        <dbReference type="PDB" id="1IP0"/>
    </source>
</evidence>
<comment type="function">
    <text evidence="6">Growth factor that binds to EGFR, ERBB4 and other EGF receptor family members. Potent mitogen for retinal pigment epithelial cells and vascular smooth muscle cells.</text>
</comment>
<comment type="subunit">
    <text evidence="4 6">Monomer. Interacts with EGFR and ERBB4.</text>
</comment>
<comment type="interaction">
    <interactant intactId="EBI-6590057">
        <id>P35070</id>
    </interactant>
    <interactant intactId="EBI-750953">
        <id>Q96IJ6</id>
        <label>GMPPA</label>
    </interactant>
    <organismsDiffer>false</organismsDiffer>
    <experiments>6</experiments>
</comment>
<comment type="interaction">
    <interactant intactId="EBI-6590057">
        <id>P35070</id>
    </interactant>
    <interactant intactId="EBI-10981970">
        <id>Q5T749</id>
        <label>KPRP</label>
    </interactant>
    <organismsDiffer>false</organismsDiffer>
    <experiments>3</experiments>
</comment>
<comment type="interaction">
    <interactant intactId="EBI-6590057">
        <id>P35070</id>
    </interactant>
    <interactant intactId="EBI-948001">
        <id>Q15323</id>
        <label>KRT31</label>
    </interactant>
    <organismsDiffer>false</organismsDiffer>
    <experiments>6</experiments>
</comment>
<comment type="interaction">
    <interactant intactId="EBI-6590057">
        <id>P35070</id>
    </interactant>
    <interactant intactId="EBI-11749135">
        <id>Q8IUG1</id>
        <label>KRTAP1-3</label>
    </interactant>
    <organismsDiffer>false</organismsDiffer>
    <experiments>3</experiments>
</comment>
<comment type="interaction">
    <interactant intactId="EBI-6590057">
        <id>P35070</id>
    </interactant>
    <interactant intactId="EBI-717058">
        <id>P26447</id>
        <label>S100A4</label>
    </interactant>
    <organismsDiffer>false</organismsDiffer>
    <experiments>2</experiments>
</comment>
<comment type="interaction">
    <interactant intactId="EBI-6590057">
        <id>P35070</id>
    </interactant>
    <interactant intactId="EBI-347996">
        <id>O43765</id>
        <label>SGTA</label>
    </interactant>
    <organismsDiffer>false</organismsDiffer>
    <experiments>6</experiments>
</comment>
<comment type="interaction">
    <interactant intactId="EBI-6590057">
        <id>P35070</id>
    </interactant>
    <interactant intactId="EBI-744081">
        <id>Q96EQ0</id>
        <label>SGTB</label>
    </interactant>
    <organismsDiffer>false</organismsDiffer>
    <experiments>3</experiments>
</comment>
<comment type="subcellular location">
    <molecule>Betacellulin</molecule>
    <subcellularLocation>
        <location>Secreted</location>
        <location>Extracellular space</location>
    </subcellularLocation>
</comment>
<comment type="subcellular location">
    <molecule>Probetacellulin</molecule>
    <subcellularLocation>
        <location>Cell membrane</location>
        <topology>Single-pass type I membrane protein</topology>
    </subcellularLocation>
</comment>
<comment type="tissue specificity">
    <text evidence="7">Synthesized in several tissues and tumor cells. Predominantly expressed in pancreas and small intestine.</text>
</comment>
<dbReference type="EMBL" id="S55606">
    <property type="protein sequence ID" value="AAB25452.1"/>
    <property type="molecule type" value="mRNA"/>
</dbReference>
<dbReference type="EMBL" id="BC011618">
    <property type="protein sequence ID" value="AAH11618.1"/>
    <property type="molecule type" value="mRNA"/>
</dbReference>
<dbReference type="CCDS" id="CCDS3566.1"/>
<dbReference type="PIR" id="JC1467">
    <property type="entry name" value="JC1467"/>
</dbReference>
<dbReference type="RefSeq" id="NP_001303892.1">
    <property type="nucleotide sequence ID" value="NM_001316963.1"/>
</dbReference>
<dbReference type="RefSeq" id="NP_001720.1">
    <property type="nucleotide sequence ID" value="NM_001729.4"/>
</dbReference>
<dbReference type="RefSeq" id="XP_011530513.1">
    <property type="nucleotide sequence ID" value="XM_011532211.2"/>
</dbReference>
<dbReference type="PDB" id="1IOX">
    <property type="method" value="NMR"/>
    <property type="chains" value="A=62-111"/>
</dbReference>
<dbReference type="PDB" id="1IP0">
    <property type="method" value="NMR"/>
    <property type="chains" value="A=62-111"/>
</dbReference>
<dbReference type="PDB" id="8U4J">
    <property type="method" value="EM"/>
    <property type="resolution" value="3.70 A"/>
    <property type="chains" value="C/D=64-111"/>
</dbReference>
<dbReference type="PDB" id="8U4K">
    <property type="method" value="EM"/>
    <property type="resolution" value="4.27 A"/>
    <property type="chains" value="C=64-111"/>
</dbReference>
<dbReference type="PDBsum" id="1IOX"/>
<dbReference type="PDBsum" id="1IP0"/>
<dbReference type="PDBsum" id="8U4J"/>
<dbReference type="PDBsum" id="8U4K"/>
<dbReference type="EMDB" id="EMD-41884"/>
<dbReference type="EMDB" id="EMD-41885"/>
<dbReference type="SMR" id="P35070"/>
<dbReference type="BioGRID" id="107150">
    <property type="interactions" value="23"/>
</dbReference>
<dbReference type="DIP" id="DIP-5768N"/>
<dbReference type="FunCoup" id="P35070">
    <property type="interactions" value="108"/>
</dbReference>
<dbReference type="IntAct" id="P35070">
    <property type="interactions" value="25"/>
</dbReference>
<dbReference type="MINT" id="P35070"/>
<dbReference type="STRING" id="9606.ENSP00000379092"/>
<dbReference type="GlyCosmos" id="P35070">
    <property type="glycosylation" value="1 site, No reported glycans"/>
</dbReference>
<dbReference type="GlyGen" id="P35070">
    <property type="glycosylation" value="2 sites"/>
</dbReference>
<dbReference type="PhosphoSitePlus" id="P35070"/>
<dbReference type="SwissPalm" id="P35070"/>
<dbReference type="BioMuta" id="BTC"/>
<dbReference type="DMDM" id="461653"/>
<dbReference type="jPOST" id="P35070"/>
<dbReference type="MassIVE" id="P35070"/>
<dbReference type="PaxDb" id="9606-ENSP00000379092"/>
<dbReference type="PeptideAtlas" id="P35070"/>
<dbReference type="ProteomicsDB" id="54977"/>
<dbReference type="Antibodypedia" id="13367">
    <property type="antibodies" value="432 antibodies from 34 providers"/>
</dbReference>
<dbReference type="DNASU" id="685"/>
<dbReference type="Ensembl" id="ENST00000395743.8">
    <property type="protein sequence ID" value="ENSP00000379092.3"/>
    <property type="gene ID" value="ENSG00000174808.12"/>
</dbReference>
<dbReference type="GeneID" id="685"/>
<dbReference type="KEGG" id="hsa:685"/>
<dbReference type="MANE-Select" id="ENST00000395743.8">
    <property type="protein sequence ID" value="ENSP00000379092.3"/>
    <property type="RefSeq nucleotide sequence ID" value="NM_001729.4"/>
    <property type="RefSeq protein sequence ID" value="NP_001720.1"/>
</dbReference>
<dbReference type="UCSC" id="uc003hig.3">
    <property type="organism name" value="human"/>
</dbReference>
<dbReference type="AGR" id="HGNC:1121"/>
<dbReference type="CTD" id="685"/>
<dbReference type="DisGeNET" id="685"/>
<dbReference type="GeneCards" id="BTC"/>
<dbReference type="HGNC" id="HGNC:1121">
    <property type="gene designation" value="BTC"/>
</dbReference>
<dbReference type="HPA" id="ENSG00000174808">
    <property type="expression patterns" value="Tissue enhanced (intestine)"/>
</dbReference>
<dbReference type="MIM" id="600345">
    <property type="type" value="gene"/>
</dbReference>
<dbReference type="neXtProt" id="NX_P35070"/>
<dbReference type="OpenTargets" id="ENSG00000174808"/>
<dbReference type="PharmGKB" id="PA25442"/>
<dbReference type="VEuPathDB" id="HostDB:ENSG00000174808"/>
<dbReference type="eggNOG" id="ENOG502RZHQ">
    <property type="taxonomic scope" value="Eukaryota"/>
</dbReference>
<dbReference type="GeneTree" id="ENSGT00940000160508"/>
<dbReference type="HOGENOM" id="CLU_112513_1_0_1"/>
<dbReference type="InParanoid" id="P35070"/>
<dbReference type="OMA" id="QPKRKGH"/>
<dbReference type="OrthoDB" id="6233064at2759"/>
<dbReference type="PAN-GO" id="P35070">
    <property type="GO annotations" value="7 GO annotations based on evolutionary models"/>
</dbReference>
<dbReference type="PhylomeDB" id="P35070"/>
<dbReference type="TreeFam" id="TF332938"/>
<dbReference type="PathwayCommons" id="P35070"/>
<dbReference type="Reactome" id="R-HSA-1227986">
    <property type="pathway name" value="Signaling by ERBB2"/>
</dbReference>
<dbReference type="Reactome" id="R-HSA-1236394">
    <property type="pathway name" value="Signaling by ERBB4"/>
</dbReference>
<dbReference type="Reactome" id="R-HSA-1250196">
    <property type="pathway name" value="SHC1 events in ERBB2 signaling"/>
</dbReference>
<dbReference type="Reactome" id="R-HSA-1250342">
    <property type="pathway name" value="PI3K events in ERBB4 signaling"/>
</dbReference>
<dbReference type="Reactome" id="R-HSA-1250347">
    <property type="pathway name" value="SHC1 events in ERBB4 signaling"/>
</dbReference>
<dbReference type="Reactome" id="R-HSA-1251985">
    <property type="pathway name" value="Nuclear signaling by ERBB4"/>
</dbReference>
<dbReference type="Reactome" id="R-HSA-1257604">
    <property type="pathway name" value="PIP3 activates AKT signaling"/>
</dbReference>
<dbReference type="Reactome" id="R-HSA-177929">
    <property type="pathway name" value="Signaling by EGFR"/>
</dbReference>
<dbReference type="Reactome" id="R-HSA-179812">
    <property type="pathway name" value="GRB2 events in EGFR signaling"/>
</dbReference>
<dbReference type="Reactome" id="R-HSA-180292">
    <property type="pathway name" value="GAB1 signalosome"/>
</dbReference>
<dbReference type="Reactome" id="R-HSA-180336">
    <property type="pathway name" value="SHC1 events in EGFR signaling"/>
</dbReference>
<dbReference type="Reactome" id="R-HSA-182971">
    <property type="pathway name" value="EGFR downregulation"/>
</dbReference>
<dbReference type="Reactome" id="R-HSA-1963640">
    <property type="pathway name" value="GRB2 events in ERBB2 signaling"/>
</dbReference>
<dbReference type="Reactome" id="R-HSA-1963642">
    <property type="pathway name" value="PI3K events in ERBB2 signaling"/>
</dbReference>
<dbReference type="Reactome" id="R-HSA-212718">
    <property type="pathway name" value="EGFR interacts with phospholipase C-gamma"/>
</dbReference>
<dbReference type="Reactome" id="R-HSA-2219530">
    <property type="pathway name" value="Constitutive Signaling by Aberrant PI3K in Cancer"/>
</dbReference>
<dbReference type="Reactome" id="R-HSA-5638303">
    <property type="pathway name" value="Inhibition of Signaling by Overexpressed EGFR"/>
</dbReference>
<dbReference type="Reactome" id="R-HSA-5673001">
    <property type="pathway name" value="RAF/MAP kinase cascade"/>
</dbReference>
<dbReference type="Reactome" id="R-HSA-6785631">
    <property type="pathway name" value="ERBB2 Regulates Cell Motility"/>
</dbReference>
<dbReference type="Reactome" id="R-HSA-6811558">
    <property type="pathway name" value="PI5P, PP2A and IER3 Regulate PI3K/AKT Signaling"/>
</dbReference>
<dbReference type="Reactome" id="R-HSA-8847993">
    <property type="pathway name" value="ERBB2 Activates PTK6 Signaling"/>
</dbReference>
<dbReference type="Reactome" id="R-HSA-8856825">
    <property type="pathway name" value="Cargo recognition for clathrin-mediated endocytosis"/>
</dbReference>
<dbReference type="Reactome" id="R-HSA-8856828">
    <property type="pathway name" value="Clathrin-mediated endocytosis"/>
</dbReference>
<dbReference type="Reactome" id="R-HSA-8863795">
    <property type="pathway name" value="Downregulation of ERBB2 signaling"/>
</dbReference>
<dbReference type="Reactome" id="R-HSA-9009391">
    <property type="pathway name" value="Extra-nuclear estrogen signaling"/>
</dbReference>
<dbReference type="Reactome" id="R-HSA-9634638">
    <property type="pathway name" value="Estrogen-dependent nuclear events downstream of ESR-membrane signaling"/>
</dbReference>
<dbReference type="Reactome" id="R-HSA-9664565">
    <property type="pathway name" value="Signaling by ERBB2 KD Mutants"/>
</dbReference>
<dbReference type="Reactome" id="R-HSA-9665686">
    <property type="pathway name" value="Signaling by ERBB2 TMD/JMD mutants"/>
</dbReference>
<dbReference type="SignaLink" id="P35070"/>
<dbReference type="SIGNOR" id="P35070"/>
<dbReference type="BioGRID-ORCS" id="685">
    <property type="hits" value="15 hits in 1150 CRISPR screens"/>
</dbReference>
<dbReference type="ChiTaRS" id="BTC">
    <property type="organism name" value="human"/>
</dbReference>
<dbReference type="EvolutionaryTrace" id="P35070"/>
<dbReference type="GenomeRNAi" id="685"/>
<dbReference type="Pharos" id="P35070">
    <property type="development level" value="Tbio"/>
</dbReference>
<dbReference type="PRO" id="PR:P35070"/>
<dbReference type="Proteomes" id="UP000005640">
    <property type="component" value="Chromosome 4"/>
</dbReference>
<dbReference type="RNAct" id="P35070">
    <property type="molecule type" value="protein"/>
</dbReference>
<dbReference type="Bgee" id="ENSG00000174808">
    <property type="expression patterns" value="Expressed in muscle layer of sigmoid colon and 133 other cell types or tissues"/>
</dbReference>
<dbReference type="ExpressionAtlas" id="P35070">
    <property type="expression patterns" value="baseline and differential"/>
</dbReference>
<dbReference type="GO" id="GO:0030669">
    <property type="term" value="C:clathrin-coated endocytic vesicle membrane"/>
    <property type="evidence" value="ECO:0000304"/>
    <property type="project" value="Reactome"/>
</dbReference>
<dbReference type="GO" id="GO:0005576">
    <property type="term" value="C:extracellular region"/>
    <property type="evidence" value="ECO:0000304"/>
    <property type="project" value="Reactome"/>
</dbReference>
<dbReference type="GO" id="GO:0005615">
    <property type="term" value="C:extracellular space"/>
    <property type="evidence" value="ECO:0000314"/>
    <property type="project" value="MGI"/>
</dbReference>
<dbReference type="GO" id="GO:0005886">
    <property type="term" value="C:plasma membrane"/>
    <property type="evidence" value="ECO:0007669"/>
    <property type="project" value="UniProtKB-SubCell"/>
</dbReference>
<dbReference type="GO" id="GO:0005154">
    <property type="term" value="F:epidermal growth factor receptor binding"/>
    <property type="evidence" value="ECO:0000318"/>
    <property type="project" value="GO_Central"/>
</dbReference>
<dbReference type="GO" id="GO:0008083">
    <property type="term" value="F:growth factor activity"/>
    <property type="evidence" value="ECO:0000318"/>
    <property type="project" value="GO_Central"/>
</dbReference>
<dbReference type="GO" id="GO:0048018">
    <property type="term" value="F:receptor ligand activity"/>
    <property type="evidence" value="ECO:0000314"/>
    <property type="project" value="MGI"/>
</dbReference>
<dbReference type="GO" id="GO:0030297">
    <property type="term" value="F:transmembrane receptor protein tyrosine kinase activator activity"/>
    <property type="evidence" value="ECO:0000314"/>
    <property type="project" value="MGI"/>
</dbReference>
<dbReference type="GO" id="GO:0008283">
    <property type="term" value="P:cell population proliferation"/>
    <property type="evidence" value="ECO:0007669"/>
    <property type="project" value="Ensembl"/>
</dbReference>
<dbReference type="GO" id="GO:0007173">
    <property type="term" value="P:epidermal growth factor receptor signaling pathway"/>
    <property type="evidence" value="ECO:0000314"/>
    <property type="project" value="ProtInc"/>
</dbReference>
<dbReference type="GO" id="GO:1904019">
    <property type="term" value="P:epithelial cell apoptotic process"/>
    <property type="evidence" value="ECO:0007669"/>
    <property type="project" value="Ensembl"/>
</dbReference>
<dbReference type="GO" id="GO:0038134">
    <property type="term" value="P:ERBB2-EGFR signaling pathway"/>
    <property type="evidence" value="ECO:0007669"/>
    <property type="project" value="Ensembl"/>
</dbReference>
<dbReference type="GO" id="GO:0038138">
    <property type="term" value="P:ERBB4-ERBB4 signaling pathway"/>
    <property type="evidence" value="ECO:0000314"/>
    <property type="project" value="MGI"/>
</dbReference>
<dbReference type="GO" id="GO:1904036">
    <property type="term" value="P:negative regulation of epithelial cell apoptotic process"/>
    <property type="evidence" value="ECO:0007669"/>
    <property type="project" value="Ensembl"/>
</dbReference>
<dbReference type="GO" id="GO:0045597">
    <property type="term" value="P:positive regulation of cell differentiation"/>
    <property type="evidence" value="ECO:0007669"/>
    <property type="project" value="Ensembl"/>
</dbReference>
<dbReference type="GO" id="GO:0051781">
    <property type="term" value="P:positive regulation of cell division"/>
    <property type="evidence" value="ECO:0007669"/>
    <property type="project" value="UniProtKB-KW"/>
</dbReference>
<dbReference type="GO" id="GO:0008284">
    <property type="term" value="P:positive regulation of cell population proliferation"/>
    <property type="evidence" value="ECO:0000318"/>
    <property type="project" value="GO_Central"/>
</dbReference>
<dbReference type="GO" id="GO:0048146">
    <property type="term" value="P:positive regulation of fibroblast proliferation"/>
    <property type="evidence" value="ECO:0007669"/>
    <property type="project" value="Ensembl"/>
</dbReference>
<dbReference type="GO" id="GO:0045840">
    <property type="term" value="P:positive regulation of mitotic nuclear division"/>
    <property type="evidence" value="ECO:0000318"/>
    <property type="project" value="GO_Central"/>
</dbReference>
<dbReference type="GO" id="GO:0035810">
    <property type="term" value="P:positive regulation of urine volume"/>
    <property type="evidence" value="ECO:0007669"/>
    <property type="project" value="Ensembl"/>
</dbReference>
<dbReference type="FunFam" id="2.10.25.10:FF:000342">
    <property type="entry name" value="Betacellulin preproprotein"/>
    <property type="match status" value="1"/>
</dbReference>
<dbReference type="Gene3D" id="2.10.25.10">
    <property type="entry name" value="Laminin"/>
    <property type="match status" value="1"/>
</dbReference>
<dbReference type="InterPro" id="IPR000742">
    <property type="entry name" value="EGF-like_dom"/>
</dbReference>
<dbReference type="PANTHER" id="PTHR10740:SF3">
    <property type="entry name" value="PROBETACELLULIN"/>
    <property type="match status" value="1"/>
</dbReference>
<dbReference type="PANTHER" id="PTHR10740">
    <property type="entry name" value="TRANSFORMING GROWTH FACTOR ALPHA"/>
    <property type="match status" value="1"/>
</dbReference>
<dbReference type="PRINTS" id="PR00009">
    <property type="entry name" value="EGFTGF"/>
</dbReference>
<dbReference type="SUPFAM" id="SSF57196">
    <property type="entry name" value="EGF/Laminin"/>
    <property type="match status" value="1"/>
</dbReference>
<dbReference type="PROSITE" id="PS00022">
    <property type="entry name" value="EGF_1"/>
    <property type="match status" value="1"/>
</dbReference>
<dbReference type="PROSITE" id="PS01186">
    <property type="entry name" value="EGF_2"/>
    <property type="match status" value="1"/>
</dbReference>
<dbReference type="PROSITE" id="PS50026">
    <property type="entry name" value="EGF_3"/>
    <property type="match status" value="1"/>
</dbReference>
<name>BTC_HUMAN</name>
<accession>P35070</accession>
<accession>Q96F48</accession>
<sequence>MDRAARCSGASSLPLLLALALGLVILHCVVADGNSTRSPETNGLLCGDPEENCAATTTQSKRKGHFSRCPKQYKHYCIKGRCRFVVAEQTPSCVCDEGYIGARCERVDLFYLRGDRGQILVICLIAVMVVFIILVIGVCTCCHPLRKRRKRKKKEEEMETLGKDITPINEDIEETNIA</sequence>
<feature type="signal peptide" evidence="1">
    <location>
        <begin position="1"/>
        <end position="31"/>
    </location>
</feature>
<feature type="chain" id="PRO_0000300685" description="Probetacellulin">
    <location>
        <begin position="32"/>
        <end position="178"/>
    </location>
</feature>
<feature type="chain" id="PRO_0000007490" description="Betacellulin">
    <location>
        <begin position="32"/>
        <end position="111"/>
    </location>
</feature>
<feature type="propeptide" id="PRO_0000007491" description="Removed in mature form" evidence="1">
    <location>
        <begin position="112"/>
        <end position="178"/>
    </location>
</feature>
<feature type="topological domain" description="Extracellular" evidence="2">
    <location>
        <begin position="32"/>
        <end position="118"/>
    </location>
</feature>
<feature type="transmembrane region" description="Helical" evidence="2">
    <location>
        <begin position="119"/>
        <end position="139"/>
    </location>
</feature>
<feature type="topological domain" description="Cytoplasmic" evidence="2">
    <location>
        <begin position="140"/>
        <end position="178"/>
    </location>
</feature>
<feature type="domain" description="EGF-like" evidence="3">
    <location>
        <begin position="65"/>
        <end position="105"/>
    </location>
</feature>
<feature type="glycosylation site" description="N-linked (GlcNAc...) asparagine" evidence="2">
    <location>
        <position position="34"/>
    </location>
</feature>
<feature type="disulfide bond">
    <location>
        <begin position="69"/>
        <end position="82"/>
    </location>
</feature>
<feature type="disulfide bond">
    <location>
        <begin position="77"/>
        <end position="93"/>
    </location>
</feature>
<feature type="disulfide bond">
    <location>
        <begin position="95"/>
        <end position="104"/>
    </location>
</feature>
<feature type="sequence variant" id="VAR_029307" description="In dbSNP:rs28549760.">
    <original>C</original>
    <variation>G</variation>
    <location>
        <position position="7"/>
    </location>
</feature>
<feature type="sequence variant" id="VAR_061151" description="In dbSNP:rs56320257.">
    <original>L</original>
    <variation>F</variation>
    <location>
        <position position="44"/>
    </location>
</feature>
<feature type="sequence variant" id="VAR_029308" description="In dbSNP:rs11938093." evidence="5">
    <original>L</original>
    <variation>M</variation>
    <location>
        <position position="124"/>
    </location>
</feature>
<feature type="strand" evidence="9">
    <location>
        <begin position="66"/>
        <end position="68"/>
    </location>
</feature>
<feature type="helix" evidence="8">
    <location>
        <begin position="71"/>
        <end position="73"/>
    </location>
</feature>
<feature type="strand" evidence="8">
    <location>
        <begin position="82"/>
        <end position="85"/>
    </location>
</feature>
<feature type="turn" evidence="8">
    <location>
        <begin position="86"/>
        <end position="89"/>
    </location>
</feature>
<feature type="strand" evidence="8">
    <location>
        <begin position="90"/>
        <end position="93"/>
    </location>
</feature>
<feature type="turn" evidence="8">
    <location>
        <begin position="101"/>
        <end position="104"/>
    </location>
</feature>
<feature type="strand" evidence="9">
    <location>
        <begin position="106"/>
        <end position="108"/>
    </location>
</feature>
<organism>
    <name type="scientific">Homo sapiens</name>
    <name type="common">Human</name>
    <dbReference type="NCBI Taxonomy" id="9606"/>
    <lineage>
        <taxon>Eukaryota</taxon>
        <taxon>Metazoa</taxon>
        <taxon>Chordata</taxon>
        <taxon>Craniata</taxon>
        <taxon>Vertebrata</taxon>
        <taxon>Euteleostomi</taxon>
        <taxon>Mammalia</taxon>
        <taxon>Eutheria</taxon>
        <taxon>Euarchontoglires</taxon>
        <taxon>Primates</taxon>
        <taxon>Haplorrhini</taxon>
        <taxon>Catarrhini</taxon>
        <taxon>Hominidae</taxon>
        <taxon>Homo</taxon>
    </lineage>
</organism>
<proteinExistence type="evidence at protein level"/>
<keyword id="KW-0002">3D-structure</keyword>
<keyword id="KW-1003">Cell membrane</keyword>
<keyword id="KW-1015">Disulfide bond</keyword>
<keyword id="KW-0245">EGF-like domain</keyword>
<keyword id="KW-0325">Glycoprotein</keyword>
<keyword id="KW-0339">Growth factor</keyword>
<keyword id="KW-0472">Membrane</keyword>
<keyword id="KW-0497">Mitogen</keyword>
<keyword id="KW-1267">Proteomics identification</keyword>
<keyword id="KW-1185">Reference proteome</keyword>
<keyword id="KW-0964">Secreted</keyword>
<keyword id="KW-0732">Signal</keyword>
<keyword id="KW-0812">Transmembrane</keyword>
<keyword id="KW-1133">Transmembrane helix</keyword>
<reference key="1">
    <citation type="journal article" date="1993" name="Biochem. Biophys. Res. Commun.">
        <title>Cloning and expression of cDNA encoding human betacellulin, a new member of the EGF family.</title>
        <authorList>
            <person name="Sasada R."/>
            <person name="Ono Y."/>
            <person name="Taniyama Y."/>
            <person name="Shing Y."/>
            <person name="Folkman J."/>
            <person name="Igarashi K."/>
        </authorList>
    </citation>
    <scope>NUCLEOTIDE SEQUENCE [MRNA]</scope>
    <source>
        <tissue>Mammary gland</tissue>
    </source>
</reference>
<reference key="2">
    <citation type="journal article" date="2004" name="Genome Res.">
        <title>The status, quality, and expansion of the NIH full-length cDNA project: the Mammalian Gene Collection (MGC).</title>
        <authorList>
            <consortium name="The MGC Project Team"/>
        </authorList>
    </citation>
    <scope>NUCLEOTIDE SEQUENCE [LARGE SCALE MRNA]</scope>
    <scope>VARIANT MET-124</scope>
    <source>
        <tissue>Ovary</tissue>
    </source>
</reference>
<reference key="3">
    <citation type="journal article" date="1994" name="J. Biol. Chem.">
        <title>Recombinant human betacellulin. Molecular structure, biological activities, and receptor interaction.</title>
        <authorList>
            <person name="Watanabe T."/>
            <person name="Shintani A."/>
            <person name="Nakata M."/>
            <person name="Shing Y."/>
            <person name="Folkman J."/>
            <person name="Igarashi K."/>
            <person name="Sasada R."/>
        </authorList>
    </citation>
    <scope>IDENTIFICATION AS EGFR LIGAND</scope>
</reference>
<reference key="4">
    <citation type="journal article" date="1996" name="Growth Factors">
        <title>Human betacellulin, a member of the EGF family dominantly expressed in pancreas and small intestine, is fully active in a monomeric form.</title>
        <authorList>
            <person name="Seno M."/>
            <person name="Tada H."/>
            <person name="Kosaka M."/>
            <person name="Sasada R."/>
            <person name="Igarashi K."/>
            <person name="Shing Y."/>
            <person name="Folkman J."/>
            <person name="Ueda M."/>
            <person name="Yamada H."/>
        </authorList>
    </citation>
    <scope>TISSUE SPECIFICITY</scope>
</reference>
<reference key="5">
    <citation type="journal article" date="1996" name="Oncogene">
        <title>Betacellulin activates the epidermal growth factor receptor and erbB-4, and induces cellular response patterns distinct from those stimulated by epidermal growth factor or neuregulin-beta.</title>
        <authorList>
            <person name="Riese D.J. II"/>
            <person name="Bermingham Y."/>
            <person name="van Raaij T.M."/>
            <person name="Buckley S."/>
            <person name="Plowman G.D."/>
            <person name="Stern D.F."/>
        </authorList>
    </citation>
    <scope>FUNCTION</scope>
    <scope>INTERACTION WITH EGFR AND ERBB4</scope>
</reference>
<reference key="6">
    <citation type="journal article" date="2000" name="J. Biol. Chem.">
        <title>Ligand discrimination in signaling through an ErbB4 receptor homodimer.</title>
        <authorList>
            <person name="Sweeney C."/>
            <person name="Lai C."/>
            <person name="Riese D.J. II"/>
            <person name="Diamonti A.J."/>
            <person name="Cantley L.C."/>
            <person name="Carraway K.L. III"/>
        </authorList>
    </citation>
    <scope>INTERACTION WITH ERBB4</scope>
</reference>
<reference key="7">
    <citation type="journal article" date="2002" name="Biochem. Biophys. Res. Commun.">
        <title>Solution structure of betacellulin, a new member of EGF-family ligands.</title>
        <authorList>
            <person name="Miura K."/>
            <person name="Doura H."/>
            <person name="Aizawa T."/>
            <person name="Tada H."/>
            <person name="Seno M."/>
            <person name="Yamada H."/>
            <person name="Kawano K."/>
        </authorList>
    </citation>
    <scope>STRUCTURE BY NMR OF 62-111</scope>
</reference>